<accession>Q1MFY9</accession>
<organism>
    <name type="scientific">Rhizobium johnstonii (strain DSM 114642 / LMG 32736 / 3841)</name>
    <name type="common">Rhizobium leguminosarum bv. viciae</name>
    <dbReference type="NCBI Taxonomy" id="216596"/>
    <lineage>
        <taxon>Bacteria</taxon>
        <taxon>Pseudomonadati</taxon>
        <taxon>Pseudomonadota</taxon>
        <taxon>Alphaproteobacteria</taxon>
        <taxon>Hyphomicrobiales</taxon>
        <taxon>Rhizobiaceae</taxon>
        <taxon>Rhizobium/Agrobacterium group</taxon>
        <taxon>Rhizobium</taxon>
        <taxon>Rhizobium johnstonii</taxon>
    </lineage>
</organism>
<proteinExistence type="inferred from homology"/>
<reference key="1">
    <citation type="journal article" date="2006" name="Genome Biol.">
        <title>The genome of Rhizobium leguminosarum has recognizable core and accessory components.</title>
        <authorList>
            <person name="Young J.P.W."/>
            <person name="Crossman L.C."/>
            <person name="Johnston A.W.B."/>
            <person name="Thomson N.R."/>
            <person name="Ghazoui Z.F."/>
            <person name="Hull K.H."/>
            <person name="Wexler M."/>
            <person name="Curson A.R.J."/>
            <person name="Todd J.D."/>
            <person name="Poole P.S."/>
            <person name="Mauchline T.H."/>
            <person name="East A.K."/>
            <person name="Quail M.A."/>
            <person name="Churcher C."/>
            <person name="Arrowsmith C."/>
            <person name="Cherevach I."/>
            <person name="Chillingworth T."/>
            <person name="Clarke K."/>
            <person name="Cronin A."/>
            <person name="Davis P."/>
            <person name="Fraser A."/>
            <person name="Hance Z."/>
            <person name="Hauser H."/>
            <person name="Jagels K."/>
            <person name="Moule S."/>
            <person name="Mungall K."/>
            <person name="Norbertczak H."/>
            <person name="Rabbinowitsch E."/>
            <person name="Sanders M."/>
            <person name="Simmonds M."/>
            <person name="Whitehead S."/>
            <person name="Parkhill J."/>
        </authorList>
    </citation>
    <scope>NUCLEOTIDE SEQUENCE [LARGE SCALE GENOMIC DNA]</scope>
    <source>
        <strain>DSM 114642 / LMG 32736 / 3841</strain>
    </source>
</reference>
<gene>
    <name type="ordered locus">RL2646</name>
</gene>
<protein>
    <recommendedName>
        <fullName evidence="1">UPF0283 membrane protein RL2646</fullName>
    </recommendedName>
</protein>
<evidence type="ECO:0000255" key="1">
    <source>
        <dbReference type="HAMAP-Rule" id="MF_01085"/>
    </source>
</evidence>
<evidence type="ECO:0000256" key="2">
    <source>
        <dbReference type="SAM" id="MobiDB-lite"/>
    </source>
</evidence>
<comment type="subcellular location">
    <subcellularLocation>
        <location evidence="1">Cell inner membrane</location>
        <topology evidence="1">Multi-pass membrane protein</topology>
    </subcellularLocation>
</comment>
<comment type="similarity">
    <text evidence="1">Belongs to the UPF0283 family.</text>
</comment>
<dbReference type="EMBL" id="AM236080">
    <property type="protein sequence ID" value="CAK08134.1"/>
    <property type="molecule type" value="Genomic_DNA"/>
</dbReference>
<dbReference type="RefSeq" id="WP_011652187.1">
    <property type="nucleotide sequence ID" value="NC_008380.1"/>
</dbReference>
<dbReference type="EnsemblBacteria" id="CAK08134">
    <property type="protein sequence ID" value="CAK08134"/>
    <property type="gene ID" value="RL2646"/>
</dbReference>
<dbReference type="KEGG" id="rle:RL2646"/>
<dbReference type="eggNOG" id="COG3768">
    <property type="taxonomic scope" value="Bacteria"/>
</dbReference>
<dbReference type="HOGENOM" id="CLU_057693_1_0_5"/>
<dbReference type="Proteomes" id="UP000006575">
    <property type="component" value="Chromosome"/>
</dbReference>
<dbReference type="GO" id="GO:0005886">
    <property type="term" value="C:plasma membrane"/>
    <property type="evidence" value="ECO:0007669"/>
    <property type="project" value="UniProtKB-SubCell"/>
</dbReference>
<dbReference type="HAMAP" id="MF_01085">
    <property type="entry name" value="UPF0283"/>
    <property type="match status" value="1"/>
</dbReference>
<dbReference type="InterPro" id="IPR021147">
    <property type="entry name" value="DUF697"/>
</dbReference>
<dbReference type="InterPro" id="IPR006507">
    <property type="entry name" value="UPF0283"/>
</dbReference>
<dbReference type="NCBIfam" id="TIGR01620">
    <property type="entry name" value="hyp_HI0043"/>
    <property type="match status" value="1"/>
</dbReference>
<dbReference type="PANTHER" id="PTHR39342">
    <property type="entry name" value="UPF0283 MEMBRANE PROTEIN YCJF"/>
    <property type="match status" value="1"/>
</dbReference>
<dbReference type="PANTHER" id="PTHR39342:SF1">
    <property type="entry name" value="UPF0283 MEMBRANE PROTEIN YCJF"/>
    <property type="match status" value="1"/>
</dbReference>
<dbReference type="Pfam" id="PF05128">
    <property type="entry name" value="DUF697"/>
    <property type="match status" value="1"/>
</dbReference>
<feature type="chain" id="PRO_1000149864" description="UPF0283 membrane protein RL2646">
    <location>
        <begin position="1"/>
        <end position="359"/>
    </location>
</feature>
<feature type="transmembrane region" description="Helical" evidence="1">
    <location>
        <begin position="77"/>
        <end position="97"/>
    </location>
</feature>
<feature type="transmembrane region" description="Helical" evidence="1">
    <location>
        <begin position="111"/>
        <end position="131"/>
    </location>
</feature>
<feature type="region of interest" description="Disordered" evidence="2">
    <location>
        <begin position="1"/>
        <end position="48"/>
    </location>
</feature>
<feature type="compositionally biased region" description="Basic and acidic residues" evidence="2">
    <location>
        <begin position="23"/>
        <end position="42"/>
    </location>
</feature>
<sequence>MSKPPSDPPRRAPAAFIYEDEATERRDNGRQGGERRKPESFSEHIVVTPDEDDPFLNPDKDLSAVPVAAPRKRRTSFGKIAAGAFGILLSLAIGLWTDSLIRDLFTRADWLGYAALAVLAVGILAVLALVIRETSGMMRLATVQTIKAEADAAMLETRPVKARAVVARLTALLSANPETAKGRATLKATEGEVIDPPHLMALAERELLAPLDRKARALIVNASKRVSIVTAVSPRAVVDLLYVLYEAVRLIRAMAELYGSRPGTLGMFRLLRDVLAHLAVTGSIAVGDSLVQQVLGHGLASKLSARLGEGVINGLMTARIGIAAMDLCRPLAFRALKRPGIGDFIGDLTPSMSPRGNNP</sequence>
<name>Y2646_RHIJ3</name>
<keyword id="KW-0997">Cell inner membrane</keyword>
<keyword id="KW-1003">Cell membrane</keyword>
<keyword id="KW-0472">Membrane</keyword>
<keyword id="KW-0812">Transmembrane</keyword>
<keyword id="KW-1133">Transmembrane helix</keyword>